<dbReference type="EC" id="2.7.1.175"/>
<dbReference type="EMBL" id="AE016958">
    <property type="protein sequence ID" value="AAS06079.1"/>
    <property type="molecule type" value="Genomic_DNA"/>
</dbReference>
<dbReference type="RefSeq" id="WP_003879051.1">
    <property type="nucleotide sequence ID" value="NZ_CP106873.1"/>
</dbReference>
<dbReference type="SMR" id="Q73U39"/>
<dbReference type="STRING" id="262316.MAP_3529"/>
<dbReference type="KEGG" id="mpa:MAP_3529"/>
<dbReference type="PATRIC" id="fig|262316.17.peg.3757"/>
<dbReference type="eggNOG" id="COG3281">
    <property type="taxonomic scope" value="Bacteria"/>
</dbReference>
<dbReference type="HOGENOM" id="CLU_029675_0_0_11"/>
<dbReference type="UniPathway" id="UPA00164"/>
<dbReference type="Proteomes" id="UP000000580">
    <property type="component" value="Chromosome"/>
</dbReference>
<dbReference type="GO" id="GO:0005524">
    <property type="term" value="F:ATP binding"/>
    <property type="evidence" value="ECO:0007669"/>
    <property type="project" value="UniProtKB-KW"/>
</dbReference>
<dbReference type="GO" id="GO:0016301">
    <property type="term" value="F:kinase activity"/>
    <property type="evidence" value="ECO:0007669"/>
    <property type="project" value="UniProtKB-KW"/>
</dbReference>
<dbReference type="GO" id="GO:0046835">
    <property type="term" value="P:carbohydrate phosphorylation"/>
    <property type="evidence" value="ECO:0000250"/>
    <property type="project" value="UniProtKB"/>
</dbReference>
<dbReference type="GO" id="GO:0005978">
    <property type="term" value="P:glycogen biosynthetic process"/>
    <property type="evidence" value="ECO:0007669"/>
    <property type="project" value="UniProtKB-UniPathway"/>
</dbReference>
<dbReference type="GO" id="GO:0005992">
    <property type="term" value="P:trehalose biosynthetic process"/>
    <property type="evidence" value="ECO:0000250"/>
    <property type="project" value="UniProtKB"/>
</dbReference>
<dbReference type="FunFam" id="3.90.1200.10:FF:000010">
    <property type="entry name" value="Maltokinase"/>
    <property type="match status" value="1"/>
</dbReference>
<dbReference type="Gene3D" id="3.90.1200.10">
    <property type="match status" value="1"/>
</dbReference>
<dbReference type="InterPro" id="IPR011009">
    <property type="entry name" value="Kinase-like_dom_sf"/>
</dbReference>
<dbReference type="InterPro" id="IPR040999">
    <property type="entry name" value="Mak_N_cap"/>
</dbReference>
<dbReference type="Pfam" id="PF18085">
    <property type="entry name" value="Mak_N_cap"/>
    <property type="match status" value="1"/>
</dbReference>
<dbReference type="SUPFAM" id="SSF56112">
    <property type="entry name" value="Protein kinase-like (PK-like)"/>
    <property type="match status" value="1"/>
</dbReference>
<proteinExistence type="inferred from homology"/>
<evidence type="ECO:0000250" key="1"/>
<evidence type="ECO:0000305" key="2"/>
<organism>
    <name type="scientific">Mycolicibacterium paratuberculosis (strain ATCC BAA-968 / K-10)</name>
    <name type="common">Mycobacterium paratuberculosis</name>
    <dbReference type="NCBI Taxonomy" id="262316"/>
    <lineage>
        <taxon>Bacteria</taxon>
        <taxon>Bacillati</taxon>
        <taxon>Actinomycetota</taxon>
        <taxon>Actinomycetes</taxon>
        <taxon>Mycobacteriales</taxon>
        <taxon>Mycobacteriaceae</taxon>
        <taxon>Mycobacterium</taxon>
        <taxon>Mycobacterium avium complex (MAC)</taxon>
    </lineage>
</organism>
<gene>
    <name type="primary">mak</name>
    <name type="ordered locus">MAP_3529</name>
</gene>
<feature type="chain" id="PRO_0000412888" description="Maltokinase">
    <location>
        <begin position="1"/>
        <end position="452"/>
    </location>
</feature>
<keyword id="KW-0067">ATP-binding</keyword>
<keyword id="KW-0119">Carbohydrate metabolism</keyword>
<keyword id="KW-0320">Glycogen biosynthesis</keyword>
<keyword id="KW-0321">Glycogen metabolism</keyword>
<keyword id="KW-0418">Kinase</keyword>
<keyword id="KW-0547">Nucleotide-binding</keyword>
<keyword id="KW-1185">Reference proteome</keyword>
<keyword id="KW-0808">Transferase</keyword>
<protein>
    <recommendedName>
        <fullName>Maltokinase</fullName>
        <shortName>MaK</shortName>
        <ecNumber>2.7.1.175</ecNumber>
    </recommendedName>
    <alternativeName>
        <fullName>Maltose-1-phosphate synthase</fullName>
    </alternativeName>
</protein>
<comment type="function">
    <text evidence="1">Catalyzes the ATP-dependent phosphorylation of maltose to maltose 1-phosphate. Is involved in a branched alpha-glucan biosynthetic pathway from trehalose, together with TreS, GlgE and GlgB (By similarity).</text>
</comment>
<comment type="catalytic activity">
    <reaction>
        <text>D-maltose + ATP = alpha-maltose 1-phosphate + ADP + H(+)</text>
        <dbReference type="Rhea" id="RHEA:31915"/>
        <dbReference type="ChEBI" id="CHEBI:15378"/>
        <dbReference type="ChEBI" id="CHEBI:17306"/>
        <dbReference type="ChEBI" id="CHEBI:30616"/>
        <dbReference type="ChEBI" id="CHEBI:63576"/>
        <dbReference type="ChEBI" id="CHEBI:456216"/>
        <dbReference type="EC" id="2.7.1.175"/>
    </reaction>
</comment>
<comment type="pathway">
    <text>Glycan biosynthesis; glycogen biosynthesis.</text>
</comment>
<comment type="subunit">
    <text evidence="1">Monomer.</text>
</comment>
<comment type="similarity">
    <text evidence="2">Belongs to the aminoglycoside phosphotransferase family.</text>
</comment>
<accession>Q73U39</accession>
<name>MAK_MYCPA</name>
<reference key="1">
    <citation type="journal article" date="2005" name="Proc. Natl. Acad. Sci. U.S.A.">
        <title>The complete genome sequence of Mycobacterium avium subspecies paratuberculosis.</title>
        <authorList>
            <person name="Li L."/>
            <person name="Bannantine J.P."/>
            <person name="Zhang Q."/>
            <person name="Amonsin A."/>
            <person name="May B.J."/>
            <person name="Alt D."/>
            <person name="Banerji N."/>
            <person name="Kanjilal S."/>
            <person name="Kapur V."/>
        </authorList>
    </citation>
    <scope>NUCLEOTIDE SEQUENCE [LARGE SCALE GENOMIC DNA]</scope>
    <source>
        <strain>ATCC BAA-968 / K-10</strain>
    </source>
</reference>
<sequence>MTEPAKLPWSDWLPQQRWYAGRNRRLTGAEPSVIVGLRDDLDLVLVDADYADGSRDRYQVLVRWDAAPVSEYSTVATIGAADDRTGFDALYDDEAPQFLLSLIDSSAVRSASGAEVRFAKEPDAQLPLEAMAHVSDAEQSNTSVIFDRDAIFKVFRRVSSGINPDIELNRVLGRAGNPHVARLLGTYEMAGADGTPETAWPLGMVTEFAANAAEGWAMATASVRDLFAEGDLYAHEVGGDFAGESYRLGEAVASVHATLAETLGTSQAAFPVDNVLARLSSTAALVPELTEYAATIEERFAKLATETITVQRVHGDLHLGQVLRTPESWLLIDFEGEPGQPLEERRAPDSPLRDVAGVLRSFEYAAYGPLVEQGAQNTDKQLAARAREWVERNRTAFCDGYAAASGIDPRDSAPLLAAYELDKAVYEAGYEARHRPGWLPIPLRSIARLTTA</sequence>